<protein>
    <recommendedName>
        <fullName evidence="1">Putative 3-methyladenine DNA glycosylase</fullName>
        <ecNumber evidence="1">3.2.2.-</ecNumber>
    </recommendedName>
</protein>
<reference key="1">
    <citation type="journal article" date="2003" name="Proc. Natl. Acad. Sci. U.S.A.">
        <title>Complete genome sequence of Lactobacillus plantarum WCFS1.</title>
        <authorList>
            <person name="Kleerebezem M."/>
            <person name="Boekhorst J."/>
            <person name="van Kranenburg R."/>
            <person name="Molenaar D."/>
            <person name="Kuipers O.P."/>
            <person name="Leer R."/>
            <person name="Tarchini R."/>
            <person name="Peters S.A."/>
            <person name="Sandbrink H.M."/>
            <person name="Fiers M.W.E.J."/>
            <person name="Stiekema W."/>
            <person name="Klein Lankhorst R.M."/>
            <person name="Bron P.A."/>
            <person name="Hoffer S.M."/>
            <person name="Nierop Groot M.N."/>
            <person name="Kerkhoven R."/>
            <person name="De Vries M."/>
            <person name="Ursing B."/>
            <person name="De Vos W.M."/>
            <person name="Siezen R.J."/>
        </authorList>
    </citation>
    <scope>NUCLEOTIDE SEQUENCE [LARGE SCALE GENOMIC DNA]</scope>
    <source>
        <strain>ATCC BAA-793 / NCIMB 8826 / WCFS1</strain>
    </source>
</reference>
<reference key="2">
    <citation type="journal article" date="2012" name="J. Bacteriol.">
        <title>Complete resequencing and reannotation of the Lactobacillus plantarum WCFS1 genome.</title>
        <authorList>
            <person name="Siezen R.J."/>
            <person name="Francke C."/>
            <person name="Renckens B."/>
            <person name="Boekhorst J."/>
            <person name="Wels M."/>
            <person name="Kleerebezem M."/>
            <person name="van Hijum S.A."/>
        </authorList>
    </citation>
    <scope>NUCLEOTIDE SEQUENCE [LARGE SCALE GENOMIC DNA]</scope>
    <scope>GENOME REANNOTATION</scope>
    <source>
        <strain>ATCC BAA-793 / NCIMB 8826 / WCFS1</strain>
    </source>
</reference>
<proteinExistence type="inferred from homology"/>
<sequence>MTAIERFLSTCTTPEIAVSLLGKQLRLQTSSGVLTAWITETEAYLGARDAGAHAYQNHQTPRNHALWQSAGTIYIYQMRAWCLLNIVTQAAGTPECVLIRGIEPDAGLERMQQQRPVPIANLTNGPGKLMQALGLDKTLNGQALQPATLSLDLSHYRQPEQVVATPRIGIVNKGEWTTAPLRYFVAGNPFVSKISRRTIDHEHHGWMTR</sequence>
<organism>
    <name type="scientific">Lactiplantibacillus plantarum (strain ATCC BAA-793 / NCIMB 8826 / WCFS1)</name>
    <name type="common">Lactobacillus plantarum</name>
    <dbReference type="NCBI Taxonomy" id="220668"/>
    <lineage>
        <taxon>Bacteria</taxon>
        <taxon>Bacillati</taxon>
        <taxon>Bacillota</taxon>
        <taxon>Bacilli</taxon>
        <taxon>Lactobacillales</taxon>
        <taxon>Lactobacillaceae</taxon>
        <taxon>Lactiplantibacillus</taxon>
    </lineage>
</organism>
<feature type="chain" id="PRO_0000100088" description="Putative 3-methyladenine DNA glycosylase">
    <location>
        <begin position="1"/>
        <end position="209"/>
    </location>
</feature>
<dbReference type="EC" id="3.2.2.-" evidence="1"/>
<dbReference type="EMBL" id="AL935263">
    <property type="protein sequence ID" value="CCC79243.1"/>
    <property type="molecule type" value="Genomic_DNA"/>
</dbReference>
<dbReference type="RefSeq" id="WP_011101615.1">
    <property type="nucleotide sequence ID" value="NC_004567.2"/>
</dbReference>
<dbReference type="RefSeq" id="YP_004889757.1">
    <property type="nucleotide sequence ID" value="NC_004567.2"/>
</dbReference>
<dbReference type="SMR" id="Q88VP8"/>
<dbReference type="STRING" id="220668.lp_1991"/>
<dbReference type="EnsemblBacteria" id="CCC79243">
    <property type="protein sequence ID" value="CCC79243"/>
    <property type="gene ID" value="lp_1991"/>
</dbReference>
<dbReference type="KEGG" id="lpl:lp_1991"/>
<dbReference type="PATRIC" id="fig|220668.9.peg.1683"/>
<dbReference type="eggNOG" id="COG2094">
    <property type="taxonomic scope" value="Bacteria"/>
</dbReference>
<dbReference type="HOGENOM" id="CLU_060471_2_0_9"/>
<dbReference type="OrthoDB" id="9794313at2"/>
<dbReference type="PhylomeDB" id="Q88VP8"/>
<dbReference type="Proteomes" id="UP000000432">
    <property type="component" value="Chromosome"/>
</dbReference>
<dbReference type="GO" id="GO:0003905">
    <property type="term" value="F:alkylbase DNA N-glycosylase activity"/>
    <property type="evidence" value="ECO:0007669"/>
    <property type="project" value="InterPro"/>
</dbReference>
<dbReference type="GO" id="GO:0003677">
    <property type="term" value="F:DNA binding"/>
    <property type="evidence" value="ECO:0007669"/>
    <property type="project" value="InterPro"/>
</dbReference>
<dbReference type="GO" id="GO:0006284">
    <property type="term" value="P:base-excision repair"/>
    <property type="evidence" value="ECO:0007669"/>
    <property type="project" value="InterPro"/>
</dbReference>
<dbReference type="CDD" id="cd00540">
    <property type="entry name" value="AAG"/>
    <property type="match status" value="1"/>
</dbReference>
<dbReference type="FunFam" id="3.10.300.10:FF:000001">
    <property type="entry name" value="Putative 3-methyladenine DNA glycosylase"/>
    <property type="match status" value="1"/>
</dbReference>
<dbReference type="Gene3D" id="3.10.300.10">
    <property type="entry name" value="Methylpurine-DNA glycosylase (MPG)"/>
    <property type="match status" value="1"/>
</dbReference>
<dbReference type="HAMAP" id="MF_00527">
    <property type="entry name" value="3MGH"/>
    <property type="match status" value="1"/>
</dbReference>
<dbReference type="InterPro" id="IPR011034">
    <property type="entry name" value="Formyl_transferase-like_C_sf"/>
</dbReference>
<dbReference type="InterPro" id="IPR003180">
    <property type="entry name" value="MPG"/>
</dbReference>
<dbReference type="InterPro" id="IPR036995">
    <property type="entry name" value="MPG_sf"/>
</dbReference>
<dbReference type="NCBIfam" id="TIGR00567">
    <property type="entry name" value="3mg"/>
    <property type="match status" value="1"/>
</dbReference>
<dbReference type="PANTHER" id="PTHR10429">
    <property type="entry name" value="DNA-3-METHYLADENINE GLYCOSYLASE"/>
    <property type="match status" value="1"/>
</dbReference>
<dbReference type="PANTHER" id="PTHR10429:SF0">
    <property type="entry name" value="DNA-3-METHYLADENINE GLYCOSYLASE"/>
    <property type="match status" value="1"/>
</dbReference>
<dbReference type="Pfam" id="PF02245">
    <property type="entry name" value="Pur_DNA_glyco"/>
    <property type="match status" value="1"/>
</dbReference>
<dbReference type="SUPFAM" id="SSF50486">
    <property type="entry name" value="FMT C-terminal domain-like"/>
    <property type="match status" value="1"/>
</dbReference>
<gene>
    <name type="ordered locus">lp_1991</name>
</gene>
<name>3MGH_LACPL</name>
<comment type="similarity">
    <text evidence="1">Belongs to the DNA glycosylase MPG family.</text>
</comment>
<evidence type="ECO:0000255" key="1">
    <source>
        <dbReference type="HAMAP-Rule" id="MF_00527"/>
    </source>
</evidence>
<accession>Q88VP8</accession>
<accession>F9UPV4</accession>
<keyword id="KW-0227">DNA damage</keyword>
<keyword id="KW-0234">DNA repair</keyword>
<keyword id="KW-0378">Hydrolase</keyword>
<keyword id="KW-1185">Reference proteome</keyword>